<organism>
    <name type="scientific">Sodalis glossinidius (strain morsitans)</name>
    <dbReference type="NCBI Taxonomy" id="343509"/>
    <lineage>
        <taxon>Bacteria</taxon>
        <taxon>Pseudomonadati</taxon>
        <taxon>Pseudomonadota</taxon>
        <taxon>Gammaproteobacteria</taxon>
        <taxon>Enterobacterales</taxon>
        <taxon>Bruguierivoracaceae</taxon>
        <taxon>Sodalis</taxon>
    </lineage>
</organism>
<evidence type="ECO:0000255" key="1">
    <source>
        <dbReference type="HAMAP-Rule" id="MF_00107"/>
    </source>
</evidence>
<reference key="1">
    <citation type="journal article" date="2006" name="Genome Res.">
        <title>Massive genome erosion and functional adaptations provide insights into the symbiotic lifestyle of Sodalis glossinidius in the tsetse host.</title>
        <authorList>
            <person name="Toh H."/>
            <person name="Weiss B.L."/>
            <person name="Perkin S.A.H."/>
            <person name="Yamashita A."/>
            <person name="Oshima K."/>
            <person name="Hattori M."/>
            <person name="Aksoy S."/>
        </authorList>
    </citation>
    <scope>NUCLEOTIDE SEQUENCE [LARGE SCALE GENOMIC DNA]</scope>
    <source>
        <strain>morsitans</strain>
    </source>
</reference>
<protein>
    <recommendedName>
        <fullName evidence="1">2-C-methyl-D-erythritol 2,4-cyclodiphosphate synthase</fullName>
        <shortName evidence="1">MECDP-synthase</shortName>
        <shortName evidence="1">MECPP-synthase</shortName>
        <shortName evidence="1">MECPS</shortName>
        <ecNumber evidence="1">4.6.1.12</ecNumber>
    </recommendedName>
</protein>
<keyword id="KW-0414">Isoprene biosynthesis</keyword>
<keyword id="KW-0456">Lyase</keyword>
<keyword id="KW-0479">Metal-binding</keyword>
<proteinExistence type="inferred from homology"/>
<name>ISPF_SODGM</name>
<feature type="chain" id="PRO_0000237755" description="2-C-methyl-D-erythritol 2,4-cyclodiphosphate synthase">
    <location>
        <begin position="1"/>
        <end position="158"/>
    </location>
</feature>
<feature type="binding site" evidence="1">
    <location>
        <begin position="8"/>
        <end position="10"/>
    </location>
    <ligand>
        <name>4-CDP-2-C-methyl-D-erythritol 2-phosphate</name>
        <dbReference type="ChEBI" id="CHEBI:57919"/>
    </ligand>
</feature>
<feature type="binding site" evidence="1">
    <location>
        <position position="8"/>
    </location>
    <ligand>
        <name>a divalent metal cation</name>
        <dbReference type="ChEBI" id="CHEBI:60240"/>
    </ligand>
</feature>
<feature type="binding site" evidence="1">
    <location>
        <position position="10"/>
    </location>
    <ligand>
        <name>a divalent metal cation</name>
        <dbReference type="ChEBI" id="CHEBI:60240"/>
    </ligand>
</feature>
<feature type="binding site" evidence="1">
    <location>
        <begin position="34"/>
        <end position="35"/>
    </location>
    <ligand>
        <name>4-CDP-2-C-methyl-D-erythritol 2-phosphate</name>
        <dbReference type="ChEBI" id="CHEBI:57919"/>
    </ligand>
</feature>
<feature type="binding site" evidence="1">
    <location>
        <position position="42"/>
    </location>
    <ligand>
        <name>a divalent metal cation</name>
        <dbReference type="ChEBI" id="CHEBI:60240"/>
    </ligand>
</feature>
<feature type="binding site" evidence="1">
    <location>
        <begin position="56"/>
        <end position="58"/>
    </location>
    <ligand>
        <name>4-CDP-2-C-methyl-D-erythritol 2-phosphate</name>
        <dbReference type="ChEBI" id="CHEBI:57919"/>
    </ligand>
</feature>
<feature type="binding site" evidence="1">
    <location>
        <begin position="61"/>
        <end position="65"/>
    </location>
    <ligand>
        <name>4-CDP-2-C-methyl-D-erythritol 2-phosphate</name>
        <dbReference type="ChEBI" id="CHEBI:57919"/>
    </ligand>
</feature>
<feature type="binding site" evidence="1">
    <location>
        <begin position="100"/>
        <end position="106"/>
    </location>
    <ligand>
        <name>4-CDP-2-C-methyl-D-erythritol 2-phosphate</name>
        <dbReference type="ChEBI" id="CHEBI:57919"/>
    </ligand>
</feature>
<feature type="binding site" evidence="1">
    <location>
        <begin position="132"/>
        <end position="135"/>
    </location>
    <ligand>
        <name>4-CDP-2-C-methyl-D-erythritol 2-phosphate</name>
        <dbReference type="ChEBI" id="CHEBI:57919"/>
    </ligand>
</feature>
<feature type="binding site" evidence="1">
    <location>
        <position position="139"/>
    </location>
    <ligand>
        <name>4-CDP-2-C-methyl-D-erythritol 2-phosphate</name>
        <dbReference type="ChEBI" id="CHEBI:57919"/>
    </ligand>
</feature>
<feature type="binding site" evidence="1">
    <location>
        <position position="142"/>
    </location>
    <ligand>
        <name>4-CDP-2-C-methyl-D-erythritol 2-phosphate</name>
        <dbReference type="ChEBI" id="CHEBI:57919"/>
    </ligand>
</feature>
<feature type="site" description="Transition state stabilizer" evidence="1">
    <location>
        <position position="34"/>
    </location>
</feature>
<feature type="site" description="Transition state stabilizer" evidence="1">
    <location>
        <position position="133"/>
    </location>
</feature>
<accession>Q2NVM3</accession>
<dbReference type="EC" id="4.6.1.12" evidence="1"/>
<dbReference type="EMBL" id="AP008232">
    <property type="protein sequence ID" value="BAE73802.1"/>
    <property type="molecule type" value="Genomic_DNA"/>
</dbReference>
<dbReference type="RefSeq" id="WP_011410500.1">
    <property type="nucleotide sequence ID" value="NC_007712.1"/>
</dbReference>
<dbReference type="SMR" id="Q2NVM3"/>
<dbReference type="STRING" id="343509.SG0527"/>
<dbReference type="KEGG" id="sgl:SG0527"/>
<dbReference type="eggNOG" id="COG0245">
    <property type="taxonomic scope" value="Bacteria"/>
</dbReference>
<dbReference type="HOGENOM" id="CLU_084630_2_0_6"/>
<dbReference type="OrthoDB" id="9804336at2"/>
<dbReference type="UniPathway" id="UPA00056">
    <property type="reaction ID" value="UER00095"/>
</dbReference>
<dbReference type="Proteomes" id="UP000001932">
    <property type="component" value="Chromosome"/>
</dbReference>
<dbReference type="GO" id="GO:0008685">
    <property type="term" value="F:2-C-methyl-D-erythritol 2,4-cyclodiphosphate synthase activity"/>
    <property type="evidence" value="ECO:0007669"/>
    <property type="project" value="UniProtKB-UniRule"/>
</dbReference>
<dbReference type="GO" id="GO:0046872">
    <property type="term" value="F:metal ion binding"/>
    <property type="evidence" value="ECO:0007669"/>
    <property type="project" value="UniProtKB-KW"/>
</dbReference>
<dbReference type="GO" id="GO:0019288">
    <property type="term" value="P:isopentenyl diphosphate biosynthetic process, methylerythritol 4-phosphate pathway"/>
    <property type="evidence" value="ECO:0007669"/>
    <property type="project" value="UniProtKB-UniRule"/>
</dbReference>
<dbReference type="GO" id="GO:0016114">
    <property type="term" value="P:terpenoid biosynthetic process"/>
    <property type="evidence" value="ECO:0007669"/>
    <property type="project" value="InterPro"/>
</dbReference>
<dbReference type="CDD" id="cd00554">
    <property type="entry name" value="MECDP_synthase"/>
    <property type="match status" value="1"/>
</dbReference>
<dbReference type="FunFam" id="3.30.1330.50:FF:000001">
    <property type="entry name" value="2-C-methyl-D-erythritol 2,4-cyclodiphosphate synthase"/>
    <property type="match status" value="1"/>
</dbReference>
<dbReference type="Gene3D" id="3.30.1330.50">
    <property type="entry name" value="2-C-methyl-D-erythritol 2,4-cyclodiphosphate synthase"/>
    <property type="match status" value="1"/>
</dbReference>
<dbReference type="HAMAP" id="MF_00107">
    <property type="entry name" value="IspF"/>
    <property type="match status" value="1"/>
</dbReference>
<dbReference type="InterPro" id="IPR003526">
    <property type="entry name" value="MECDP_synthase"/>
</dbReference>
<dbReference type="InterPro" id="IPR020555">
    <property type="entry name" value="MECDP_synthase_CS"/>
</dbReference>
<dbReference type="InterPro" id="IPR036571">
    <property type="entry name" value="MECDP_synthase_sf"/>
</dbReference>
<dbReference type="NCBIfam" id="TIGR00151">
    <property type="entry name" value="ispF"/>
    <property type="match status" value="1"/>
</dbReference>
<dbReference type="PANTHER" id="PTHR43181">
    <property type="entry name" value="2-C-METHYL-D-ERYTHRITOL 2,4-CYCLODIPHOSPHATE SYNTHASE, CHLOROPLASTIC"/>
    <property type="match status" value="1"/>
</dbReference>
<dbReference type="PANTHER" id="PTHR43181:SF1">
    <property type="entry name" value="2-C-METHYL-D-ERYTHRITOL 2,4-CYCLODIPHOSPHATE SYNTHASE, CHLOROPLASTIC"/>
    <property type="match status" value="1"/>
</dbReference>
<dbReference type="Pfam" id="PF02542">
    <property type="entry name" value="YgbB"/>
    <property type="match status" value="1"/>
</dbReference>
<dbReference type="SUPFAM" id="SSF69765">
    <property type="entry name" value="IpsF-like"/>
    <property type="match status" value="1"/>
</dbReference>
<dbReference type="PROSITE" id="PS01350">
    <property type="entry name" value="ISPF"/>
    <property type="match status" value="1"/>
</dbReference>
<sequence length="158" mass="16739">MRIGHGFDVHKFGGEGPLIIGGVRIPYPQGLLAHSDGDVALHTATDALLGAAALGDIGKLFPDTDSAFKGADSRALLREAWRRIAAKGYRLGNLDITLIAQVPKMALHIPQMRVNIAEDLGCHMDDVNVKATTTEQLGFTGRGEGIACEAVALLVRTS</sequence>
<comment type="function">
    <text evidence="1">Involved in the biosynthesis of isopentenyl diphosphate (IPP) and dimethylallyl diphosphate (DMAPP), two major building blocks of isoprenoid compounds. Catalyzes the conversion of 4-diphosphocytidyl-2-C-methyl-D-erythritol 2-phosphate (CDP-ME2P) to 2-C-methyl-D-erythritol 2,4-cyclodiphosphate (ME-CPP) with a corresponding release of cytidine 5-monophosphate (CMP).</text>
</comment>
<comment type="catalytic activity">
    <reaction evidence="1">
        <text>4-CDP-2-C-methyl-D-erythritol 2-phosphate = 2-C-methyl-D-erythritol 2,4-cyclic diphosphate + CMP</text>
        <dbReference type="Rhea" id="RHEA:23864"/>
        <dbReference type="ChEBI" id="CHEBI:57919"/>
        <dbReference type="ChEBI" id="CHEBI:58483"/>
        <dbReference type="ChEBI" id="CHEBI:60377"/>
        <dbReference type="EC" id="4.6.1.12"/>
    </reaction>
</comment>
<comment type="cofactor">
    <cofactor evidence="1">
        <name>a divalent metal cation</name>
        <dbReference type="ChEBI" id="CHEBI:60240"/>
    </cofactor>
    <text evidence="1">Binds 1 divalent metal cation per subunit.</text>
</comment>
<comment type="pathway">
    <text evidence="1">Isoprenoid biosynthesis; isopentenyl diphosphate biosynthesis via DXP pathway; isopentenyl diphosphate from 1-deoxy-D-xylulose 5-phosphate: step 4/6.</text>
</comment>
<comment type="subunit">
    <text evidence="1">Homotrimer.</text>
</comment>
<comment type="similarity">
    <text evidence="1">Belongs to the IspF family.</text>
</comment>
<gene>
    <name evidence="1" type="primary">ispF</name>
    <name type="ordered locus">SG0527</name>
</gene>